<evidence type="ECO:0000250" key="1"/>
<evidence type="ECO:0000250" key="2">
    <source>
        <dbReference type="UniProtKB" id="Q03431"/>
    </source>
</evidence>
<evidence type="ECO:0000255" key="3"/>
<evidence type="ECO:0000256" key="4">
    <source>
        <dbReference type="SAM" id="MobiDB-lite"/>
    </source>
</evidence>
<evidence type="ECO:0000269" key="5">
    <source>
    </source>
</evidence>
<evidence type="ECO:0000305" key="6"/>
<protein>
    <recommendedName>
        <fullName>Parathyroid hormone/parathyroid hormone-related peptide receptor</fullName>
    </recommendedName>
    <alternativeName>
        <fullName>PTH/PTHrP type I receptor</fullName>
        <shortName>PTH/PTHr receptor</shortName>
    </alternativeName>
    <alternativeName>
        <fullName>Parathyroid hormone 1 receptor</fullName>
        <shortName>PTH1 receptor</shortName>
    </alternativeName>
</protein>
<accession>P41593</accession>
<accession>Q62119</accession>
<accession>Q80WU8</accession>
<keyword id="KW-1003">Cell membrane</keyword>
<keyword id="KW-1015">Disulfide bond</keyword>
<keyword id="KW-0297">G-protein coupled receptor</keyword>
<keyword id="KW-0325">Glycoprotein</keyword>
<keyword id="KW-0472">Membrane</keyword>
<keyword id="KW-0675">Receptor</keyword>
<keyword id="KW-1185">Reference proteome</keyword>
<keyword id="KW-0732">Signal</keyword>
<keyword id="KW-0807">Transducer</keyword>
<keyword id="KW-0812">Transmembrane</keyword>
<keyword id="KW-1133">Transmembrane helix</keyword>
<reference key="1">
    <citation type="journal article" date="1994" name="Mech. Dev.">
        <title>Expression pattern of parathyroid hormone/parathyroid hormone related peptide receptor mRNA in mouse postimplantation embryos indicates involvement in multiple developmental processes.</title>
        <authorList>
            <person name="Karperien M."/>
            <person name="van Dijk T.B."/>
            <person name="Hoeijmakers T."/>
            <person name="Cremers F."/>
            <person name="Abou-Samra A.-B."/>
            <person name="Boonstra J."/>
            <person name="de Laat S.W."/>
            <person name="Defize L.H.K."/>
        </authorList>
    </citation>
    <scope>NUCLEOTIDE SEQUENCE [MRNA]</scope>
    <scope>FUNCTION</scope>
    <scope>SUBCELLULAR LOCATION</scope>
    <source>
        <strain>C3H/HEHA</strain>
    </source>
</reference>
<reference key="2">
    <citation type="journal article" date="1994" name="Proc. Natl. Acad. Sci. U.S.A.">
        <title>Molecular cloning of the gene encoding the mouse parathyroid hormone/parathyroid hormone-related peptide receptor.</title>
        <authorList>
            <person name="McCuaig K.A."/>
            <person name="Clarke J.C."/>
            <person name="White J.H."/>
        </authorList>
    </citation>
    <scope>NUCLEOTIDE SEQUENCE [GENOMIC DNA]</scope>
    <scope>FUNCTION</scope>
    <scope>TISSUE SPECIFICITY</scope>
    <source>
        <strain>BALB/cJ</strain>
    </source>
</reference>
<reference key="3">
    <citation type="journal article" date="2004" name="Genome Res.">
        <title>The status, quality, and expansion of the NIH full-length cDNA project: the Mammalian Gene Collection (MGC).</title>
        <authorList>
            <consortium name="The MGC Project Team"/>
        </authorList>
    </citation>
    <scope>NUCLEOTIDE SEQUENCE [LARGE SCALE MRNA]</scope>
    <source>
        <strain>C57BL/6J</strain>
        <tissue>Brain</tissue>
    </source>
</reference>
<reference key="4">
    <citation type="journal article" date="2010" name="Cell">
        <title>A tissue-specific atlas of mouse protein phosphorylation and expression.</title>
        <authorList>
            <person name="Huttlin E.L."/>
            <person name="Jedrychowski M.P."/>
            <person name="Elias J.E."/>
            <person name="Goswami T."/>
            <person name="Rad R."/>
            <person name="Beausoleil S.A."/>
            <person name="Villen J."/>
            <person name="Haas W."/>
            <person name="Sowa M.E."/>
            <person name="Gygi S.P."/>
        </authorList>
    </citation>
    <scope>IDENTIFICATION BY MASS SPECTROMETRY [LARGE SCALE ANALYSIS]</scope>
    <source>
        <tissue>Kidney</tissue>
    </source>
</reference>
<name>PTH1R_MOUSE</name>
<dbReference type="EMBL" id="X78936">
    <property type="protein sequence ID" value="CAA55536.1"/>
    <property type="molecule type" value="mRNA"/>
</dbReference>
<dbReference type="EMBL" id="L34611">
    <property type="protein sequence ID" value="AAA40011.1"/>
    <property type="molecule type" value="Genomic_DNA"/>
</dbReference>
<dbReference type="EMBL" id="L34608">
    <property type="protein sequence ID" value="AAA40011.1"/>
    <property type="status" value="JOINED"/>
    <property type="molecule type" value="Genomic_DNA"/>
</dbReference>
<dbReference type="EMBL" id="L34607">
    <property type="protein sequence ID" value="AAA40011.1"/>
    <property type="status" value="JOINED"/>
    <property type="molecule type" value="Genomic_DNA"/>
</dbReference>
<dbReference type="EMBL" id="L34609">
    <property type="protein sequence ID" value="AAA40011.1"/>
    <property type="status" value="JOINED"/>
    <property type="molecule type" value="Genomic_DNA"/>
</dbReference>
<dbReference type="EMBL" id="L34610">
    <property type="protein sequence ID" value="AAA40011.1"/>
    <property type="status" value="JOINED"/>
    <property type="molecule type" value="Genomic_DNA"/>
</dbReference>
<dbReference type="EMBL" id="BC051981">
    <property type="protein sequence ID" value="AAH51981.1"/>
    <property type="molecule type" value="mRNA"/>
</dbReference>
<dbReference type="CCDS" id="CCDS52940.1"/>
<dbReference type="PIR" id="I59297">
    <property type="entry name" value="I59297"/>
</dbReference>
<dbReference type="PIR" id="S44203">
    <property type="entry name" value="S44203"/>
</dbReference>
<dbReference type="RefSeq" id="NP_001077404.1">
    <property type="nucleotide sequence ID" value="NM_001083935.1"/>
</dbReference>
<dbReference type="RefSeq" id="NP_001077405.1">
    <property type="nucleotide sequence ID" value="NM_001083936.1"/>
</dbReference>
<dbReference type="RefSeq" id="NP_035329.2">
    <property type="nucleotide sequence ID" value="NM_011199.2"/>
</dbReference>
<dbReference type="SMR" id="P41593"/>
<dbReference type="BioGRID" id="202466">
    <property type="interactions" value="1"/>
</dbReference>
<dbReference type="FunCoup" id="P41593">
    <property type="interactions" value="444"/>
</dbReference>
<dbReference type="IntAct" id="P41593">
    <property type="interactions" value="1"/>
</dbReference>
<dbReference type="STRING" id="10090.ENSMUSP00000006005"/>
<dbReference type="ChEMBL" id="CHEMBL1075300"/>
<dbReference type="GlyCosmos" id="P41593">
    <property type="glycosylation" value="4 sites, No reported glycans"/>
</dbReference>
<dbReference type="GlyGen" id="P41593">
    <property type="glycosylation" value="4 sites"/>
</dbReference>
<dbReference type="iPTMnet" id="P41593"/>
<dbReference type="PhosphoSitePlus" id="P41593"/>
<dbReference type="PaxDb" id="10090-ENSMUSP00000006005"/>
<dbReference type="ProteomicsDB" id="302008"/>
<dbReference type="Antibodypedia" id="1960">
    <property type="antibodies" value="423 antibodies from 39 providers"/>
</dbReference>
<dbReference type="DNASU" id="19228"/>
<dbReference type="Ensembl" id="ENSMUST00000006005.12">
    <property type="protein sequence ID" value="ENSMUSP00000006005.8"/>
    <property type="gene ID" value="ENSMUSG00000032492.15"/>
</dbReference>
<dbReference type="Ensembl" id="ENSMUST00000166716.8">
    <property type="protein sequence ID" value="ENSMUSP00000132064.2"/>
    <property type="gene ID" value="ENSMUSG00000032492.15"/>
</dbReference>
<dbReference type="Ensembl" id="ENSMUST00000198865.5">
    <property type="protein sequence ID" value="ENSMUSP00000143298.2"/>
    <property type="gene ID" value="ENSMUSG00000032492.15"/>
</dbReference>
<dbReference type="GeneID" id="19228"/>
<dbReference type="KEGG" id="mmu:19228"/>
<dbReference type="UCSC" id="uc009ruo.1">
    <property type="organism name" value="mouse"/>
</dbReference>
<dbReference type="AGR" id="MGI:97801"/>
<dbReference type="CTD" id="5745"/>
<dbReference type="MGI" id="MGI:97801">
    <property type="gene designation" value="Pth1r"/>
</dbReference>
<dbReference type="VEuPathDB" id="HostDB:ENSMUSG00000032492"/>
<dbReference type="eggNOG" id="KOG4564">
    <property type="taxonomic scope" value="Eukaryota"/>
</dbReference>
<dbReference type="GeneTree" id="ENSGT00940000158574"/>
<dbReference type="InParanoid" id="P41593"/>
<dbReference type="OMA" id="LICWPEG"/>
<dbReference type="OrthoDB" id="6160250at2759"/>
<dbReference type="PhylomeDB" id="P41593"/>
<dbReference type="TreeFam" id="TF315710"/>
<dbReference type="Reactome" id="R-MMU-373080">
    <property type="pathway name" value="Class B/2 (Secretin family receptors)"/>
</dbReference>
<dbReference type="Reactome" id="R-MMU-418555">
    <property type="pathway name" value="G alpha (s) signalling events"/>
</dbReference>
<dbReference type="BioGRID-ORCS" id="19228">
    <property type="hits" value="2 hits in 77 CRISPR screens"/>
</dbReference>
<dbReference type="ChiTaRS" id="Pth1r">
    <property type="organism name" value="mouse"/>
</dbReference>
<dbReference type="PRO" id="PR:P41593"/>
<dbReference type="Proteomes" id="UP000000589">
    <property type="component" value="Chromosome 9"/>
</dbReference>
<dbReference type="RNAct" id="P41593">
    <property type="molecule type" value="protein"/>
</dbReference>
<dbReference type="Bgee" id="ENSMUSG00000032492">
    <property type="expression patterns" value="Expressed in right kidney and 269 other cell types or tissues"/>
</dbReference>
<dbReference type="ExpressionAtlas" id="P41593">
    <property type="expression patterns" value="baseline and differential"/>
</dbReference>
<dbReference type="GO" id="GO:0005829">
    <property type="term" value="C:cytosol"/>
    <property type="evidence" value="ECO:0007669"/>
    <property type="project" value="Ensembl"/>
</dbReference>
<dbReference type="GO" id="GO:0005730">
    <property type="term" value="C:nucleolus"/>
    <property type="evidence" value="ECO:0007669"/>
    <property type="project" value="Ensembl"/>
</dbReference>
<dbReference type="GO" id="GO:0005886">
    <property type="term" value="C:plasma membrane"/>
    <property type="evidence" value="ECO:0007669"/>
    <property type="project" value="UniProtKB-SubCell"/>
</dbReference>
<dbReference type="GO" id="GO:0004991">
    <property type="term" value="F:parathyroid hormone receptor activity"/>
    <property type="evidence" value="ECO:0000315"/>
    <property type="project" value="MGI"/>
</dbReference>
<dbReference type="GO" id="GO:0017046">
    <property type="term" value="F:peptide hormone binding"/>
    <property type="evidence" value="ECO:0000250"/>
    <property type="project" value="UniProtKB"/>
</dbReference>
<dbReference type="GO" id="GO:0042803">
    <property type="term" value="F:protein homodimerization activity"/>
    <property type="evidence" value="ECO:0000250"/>
    <property type="project" value="UniProtKB"/>
</dbReference>
<dbReference type="GO" id="GO:0007189">
    <property type="term" value="P:adenylate cyclase-activating G protein-coupled receptor signaling pathway"/>
    <property type="evidence" value="ECO:0000315"/>
    <property type="project" value="MGI"/>
</dbReference>
<dbReference type="GO" id="GO:0030282">
    <property type="term" value="P:bone mineralization"/>
    <property type="evidence" value="ECO:0000315"/>
    <property type="project" value="MGI"/>
</dbReference>
<dbReference type="GO" id="GO:0045453">
    <property type="term" value="P:bone resorption"/>
    <property type="evidence" value="ECO:0000315"/>
    <property type="project" value="MGI"/>
</dbReference>
<dbReference type="GO" id="GO:0048469">
    <property type="term" value="P:cell maturation"/>
    <property type="evidence" value="ECO:0000315"/>
    <property type="project" value="MGI"/>
</dbReference>
<dbReference type="GO" id="GO:0008283">
    <property type="term" value="P:cell population proliferation"/>
    <property type="evidence" value="ECO:0000315"/>
    <property type="project" value="MGI"/>
</dbReference>
<dbReference type="GO" id="GO:0007166">
    <property type="term" value="P:cell surface receptor signaling pathway"/>
    <property type="evidence" value="ECO:0007669"/>
    <property type="project" value="InterPro"/>
</dbReference>
<dbReference type="GO" id="GO:0002062">
    <property type="term" value="P:chondrocyte differentiation"/>
    <property type="evidence" value="ECO:0000315"/>
    <property type="project" value="MGI"/>
</dbReference>
<dbReference type="GO" id="GO:0001701">
    <property type="term" value="P:in utero embryonic development"/>
    <property type="evidence" value="ECO:0000315"/>
    <property type="project" value="MGI"/>
</dbReference>
<dbReference type="GO" id="GO:0006874">
    <property type="term" value="P:intracellular calcium ion homeostasis"/>
    <property type="evidence" value="ECO:0000315"/>
    <property type="project" value="MGI"/>
</dbReference>
<dbReference type="GO" id="GO:0008285">
    <property type="term" value="P:negative regulation of cell population proliferation"/>
    <property type="evidence" value="ECO:0000315"/>
    <property type="project" value="MGI"/>
</dbReference>
<dbReference type="GO" id="GO:0001503">
    <property type="term" value="P:ossification"/>
    <property type="evidence" value="ECO:0000315"/>
    <property type="project" value="MGI"/>
</dbReference>
<dbReference type="GO" id="GO:0002076">
    <property type="term" value="P:osteoblast development"/>
    <property type="evidence" value="ECO:0000315"/>
    <property type="project" value="MGI"/>
</dbReference>
<dbReference type="GO" id="GO:0007200">
    <property type="term" value="P:phospholipase C-activating G protein-coupled receptor signaling pathway"/>
    <property type="evidence" value="ECO:0000315"/>
    <property type="project" value="MGI"/>
</dbReference>
<dbReference type="GO" id="GO:0008284">
    <property type="term" value="P:positive regulation of cell population proliferation"/>
    <property type="evidence" value="ECO:0000316"/>
    <property type="project" value="MGI"/>
</dbReference>
<dbReference type="GO" id="GO:0001501">
    <property type="term" value="P:skeletal system development"/>
    <property type="evidence" value="ECO:0000315"/>
    <property type="project" value="MGI"/>
</dbReference>
<dbReference type="FunFam" id="1.20.1070.10:FF:000070">
    <property type="entry name" value="Parathyroid hormone/parathyroid hormone-related peptide receptor"/>
    <property type="match status" value="1"/>
</dbReference>
<dbReference type="Gene3D" id="4.10.1240.10">
    <property type="entry name" value="GPCR, family 2, extracellular hormone receptor domain"/>
    <property type="match status" value="1"/>
</dbReference>
<dbReference type="Gene3D" id="1.20.1070.10">
    <property type="entry name" value="Rhodopsin 7-helix transmembrane proteins"/>
    <property type="match status" value="1"/>
</dbReference>
<dbReference type="InterPro" id="IPR050332">
    <property type="entry name" value="GPCR_2"/>
</dbReference>
<dbReference type="InterPro" id="IPR017981">
    <property type="entry name" value="GPCR_2-like_7TM"/>
</dbReference>
<dbReference type="InterPro" id="IPR036445">
    <property type="entry name" value="GPCR_2_extracell_dom_sf"/>
</dbReference>
<dbReference type="InterPro" id="IPR001879">
    <property type="entry name" value="GPCR_2_extracellular_dom"/>
</dbReference>
<dbReference type="InterPro" id="IPR002170">
    <property type="entry name" value="GPCR_2_parathyroid_rcpt"/>
</dbReference>
<dbReference type="InterPro" id="IPR000832">
    <property type="entry name" value="GPCR_2_secretin-like"/>
</dbReference>
<dbReference type="InterPro" id="IPR017983">
    <property type="entry name" value="GPCR_2_secretin-like_CS"/>
</dbReference>
<dbReference type="PANTHER" id="PTHR45620:SF27">
    <property type="entry name" value="PARATHYROID HORMONE_PARATHYROID HORMONE-RELATED PEPTIDE RECEPTOR"/>
    <property type="match status" value="1"/>
</dbReference>
<dbReference type="PANTHER" id="PTHR45620">
    <property type="entry name" value="PDF RECEPTOR-LIKE PROTEIN-RELATED"/>
    <property type="match status" value="1"/>
</dbReference>
<dbReference type="Pfam" id="PF00002">
    <property type="entry name" value="7tm_2"/>
    <property type="match status" value="1"/>
</dbReference>
<dbReference type="Pfam" id="PF02793">
    <property type="entry name" value="HRM"/>
    <property type="match status" value="1"/>
</dbReference>
<dbReference type="PRINTS" id="PR00249">
    <property type="entry name" value="GPCRSECRETIN"/>
</dbReference>
<dbReference type="PRINTS" id="PR00393">
    <property type="entry name" value="PTRHORMONER"/>
</dbReference>
<dbReference type="SMART" id="SM00008">
    <property type="entry name" value="HormR"/>
    <property type="match status" value="1"/>
</dbReference>
<dbReference type="SUPFAM" id="SSF81321">
    <property type="entry name" value="Family A G protein-coupled receptor-like"/>
    <property type="match status" value="1"/>
</dbReference>
<dbReference type="SUPFAM" id="SSF111418">
    <property type="entry name" value="Hormone receptor domain"/>
    <property type="match status" value="1"/>
</dbReference>
<dbReference type="PROSITE" id="PS00649">
    <property type="entry name" value="G_PROTEIN_RECEP_F2_1"/>
    <property type="match status" value="1"/>
</dbReference>
<dbReference type="PROSITE" id="PS00650">
    <property type="entry name" value="G_PROTEIN_RECEP_F2_2"/>
    <property type="match status" value="1"/>
</dbReference>
<dbReference type="PROSITE" id="PS50227">
    <property type="entry name" value="G_PROTEIN_RECEP_F2_3"/>
    <property type="match status" value="1"/>
</dbReference>
<dbReference type="PROSITE" id="PS50261">
    <property type="entry name" value="G_PROTEIN_RECEP_F2_4"/>
    <property type="match status" value="1"/>
</dbReference>
<gene>
    <name type="primary">Pth1r</name>
    <name type="synonym">Pthr</name>
    <name type="synonym">Pthr1</name>
</gene>
<organism>
    <name type="scientific">Mus musculus</name>
    <name type="common">Mouse</name>
    <dbReference type="NCBI Taxonomy" id="10090"/>
    <lineage>
        <taxon>Eukaryota</taxon>
        <taxon>Metazoa</taxon>
        <taxon>Chordata</taxon>
        <taxon>Craniata</taxon>
        <taxon>Vertebrata</taxon>
        <taxon>Euteleostomi</taxon>
        <taxon>Mammalia</taxon>
        <taxon>Eutheria</taxon>
        <taxon>Euarchontoglires</taxon>
        <taxon>Glires</taxon>
        <taxon>Rodentia</taxon>
        <taxon>Myomorpha</taxon>
        <taxon>Muroidea</taxon>
        <taxon>Muridae</taxon>
        <taxon>Murinae</taxon>
        <taxon>Mus</taxon>
        <taxon>Mus</taxon>
    </lineage>
</organism>
<sequence>MGTARIAPSLALLLCCPVLSSAYALVDADDVFTKEEQIFLLHRAQAQCDKLLKEVLHTAANIMESDKGWTPASTSGKPRKEKAPGKFYPESKENKDVPTGSRRRGRPCLPEWDNIVCWPLGAPGEVVAVPCPDYIYDFNHKGHAYRRCDRNGSWEVVPGHNRTWANYSECLKFMTNETREREVFDRLGMIYTVGYSMSLASLTVAVLILAYFRRLHCTRNYIHMHMFLSFMLRAASIFVKDAVLYSGFTLDEAERLTEEELHIIAQVPPPPAAAAVGYAGCRVAVTFFLYFLATNYYWILVEGLYLHSLIFMAFFSEKKYLWGFTIFGWGLPAVFVAVWVGVRATLANTGCWDLSSGHKKWIIQVPILASVVLNFILFINIIRVLATKLRETNAGRCDTRQQYRKLLRSTLVLVPLFGVHYTVFMALPYTEVSGTLWQIQMHYEMLFNSFQGFFVAIIYCFCNGEVQAEIRKSWSRWTLALDFKRKARSGSSSYSYGPMVSHTSVTNVGPRAGLSLPLSPRLLPATTNGHSQLPGHAKPGAPAIENETIPVTMTVPKDDGFLNGSCSGLDEEASGSARPPPLLQEEWETVM</sequence>
<feature type="signal peptide" evidence="3">
    <location>
        <begin position="1"/>
        <end position="26"/>
    </location>
</feature>
<feature type="chain" id="PRO_0000012846" description="Parathyroid hormone/parathyroid hormone-related peptide receptor">
    <location>
        <begin position="27"/>
        <end position="591"/>
    </location>
</feature>
<feature type="topological domain" description="Extracellular" evidence="3">
    <location>
        <begin position="27"/>
        <end position="188"/>
    </location>
</feature>
<feature type="transmembrane region" description="Helical; Name=1" evidence="3">
    <location>
        <begin position="189"/>
        <end position="212"/>
    </location>
</feature>
<feature type="topological domain" description="Cytoplasmic" evidence="3">
    <location>
        <begin position="213"/>
        <end position="219"/>
    </location>
</feature>
<feature type="transmembrane region" description="Helical; Name=2" evidence="3">
    <location>
        <begin position="220"/>
        <end position="239"/>
    </location>
</feature>
<feature type="topological domain" description="Extracellular" evidence="3">
    <location>
        <begin position="240"/>
        <end position="282"/>
    </location>
</feature>
<feature type="transmembrane region" description="Helical; Name=3" evidence="3">
    <location>
        <begin position="283"/>
        <end position="306"/>
    </location>
</feature>
<feature type="topological domain" description="Cytoplasmic" evidence="3">
    <location>
        <begin position="307"/>
        <end position="320"/>
    </location>
</feature>
<feature type="transmembrane region" description="Helical; Name=4" evidence="3">
    <location>
        <begin position="321"/>
        <end position="342"/>
    </location>
</feature>
<feature type="topological domain" description="Extracellular" evidence="3">
    <location>
        <begin position="343"/>
        <end position="361"/>
    </location>
</feature>
<feature type="transmembrane region" description="Helical; Name=5" evidence="3">
    <location>
        <begin position="362"/>
        <end position="382"/>
    </location>
</feature>
<feature type="topological domain" description="Cytoplasmic" evidence="3">
    <location>
        <begin position="383"/>
        <end position="409"/>
    </location>
</feature>
<feature type="transmembrane region" description="Helical; Name=6" evidence="3">
    <location>
        <begin position="410"/>
        <end position="428"/>
    </location>
</feature>
<feature type="topological domain" description="Extracellular" evidence="3">
    <location>
        <begin position="429"/>
        <end position="440"/>
    </location>
</feature>
<feature type="transmembrane region" description="Helical; Name=7" evidence="3">
    <location>
        <begin position="441"/>
        <end position="463"/>
    </location>
</feature>
<feature type="topological domain" description="Cytoplasmic" evidence="3">
    <location>
        <begin position="464"/>
        <end position="591"/>
    </location>
</feature>
<feature type="region of interest" description="Disordered" evidence="4">
    <location>
        <begin position="67"/>
        <end position="104"/>
    </location>
</feature>
<feature type="short sequence motif" description="Important for interaction with G proteins" evidence="1">
    <location>
        <begin position="474"/>
        <end position="477"/>
    </location>
</feature>
<feature type="compositionally biased region" description="Basic and acidic residues" evidence="4">
    <location>
        <begin position="81"/>
        <end position="96"/>
    </location>
</feature>
<feature type="glycosylation site" description="N-linked (GlcNAc...) asparagine" evidence="3">
    <location>
        <position position="151"/>
    </location>
</feature>
<feature type="glycosylation site" description="N-linked (GlcNAc...) asparagine" evidence="3">
    <location>
        <position position="161"/>
    </location>
</feature>
<feature type="glycosylation site" description="N-linked (GlcNAc...) asparagine" evidence="3">
    <location>
        <position position="166"/>
    </location>
</feature>
<feature type="glycosylation site" description="N-linked (GlcNAc...) asparagine" evidence="3">
    <location>
        <position position="176"/>
    </location>
</feature>
<feature type="disulfide bond" evidence="2">
    <location>
        <begin position="48"/>
        <end position="117"/>
    </location>
</feature>
<feature type="disulfide bond" evidence="2">
    <location>
        <begin position="108"/>
        <end position="148"/>
    </location>
</feature>
<feature type="disulfide bond" evidence="2">
    <location>
        <begin position="131"/>
        <end position="170"/>
    </location>
</feature>
<feature type="sequence conflict" description="In Ref. 2; AAA40011." evidence="6" ref="2">
    <original>DA</original>
    <variation>TS</variation>
    <location>
        <begin position="27"/>
        <end position="28"/>
    </location>
</feature>
<feature type="sequence conflict" description="In Ref. 2; AAA40011." evidence="6" ref="2">
    <location>
        <begin position="464"/>
        <end position="465"/>
    </location>
</feature>
<feature type="sequence conflict" description="In Ref. 1; CAA55536." evidence="6" ref="1">
    <original>VS</original>
    <variation>GA</variation>
    <location>
        <begin position="500"/>
        <end position="501"/>
    </location>
</feature>
<comment type="function">
    <text evidence="2 5">G-protein-coupled receptor for parathyroid hormone (PTH) and for parathyroid hormone-related peptide (PTHLH) (PubMed:8197183). Ligand binding causes a conformation change that triggers signaling via guanine nucleotide-binding proteins (G proteins) and modulates the activity of downstream effectors, such as adenylate cyclase (cAMP) (By similarity). PTH1R is coupled to G(s) G alpha proteins and mediates activation of adenylate cyclase activity. PTHLH dissociates from PTH1R more rapidly than PTH; as consequence, the cAMP response induced by PTHLH decays faster than the response induced by PTH (By similarity).</text>
</comment>
<comment type="subunit">
    <text evidence="2">Homodimer in the absence of bound ligand. Peptide hormone binding leads to dissociation of the homodimer.</text>
</comment>
<comment type="subcellular location">
    <subcellularLocation>
        <location evidence="5">Cell membrane</location>
        <topology evidence="6">Multi-pass membrane protein</topology>
    </subcellularLocation>
</comment>
<comment type="tissue specificity">
    <text evidence="5">Detected in kidney.</text>
</comment>
<comment type="PTM">
    <text evidence="2">N-glycosylated.</text>
</comment>
<comment type="similarity">
    <text evidence="6">Belongs to the G-protein coupled receptor 2 family.</text>
</comment>
<proteinExistence type="evidence at protein level"/>